<dbReference type="EC" id="6.1.1.7" evidence="1"/>
<dbReference type="EMBL" id="AE004969">
    <property type="protein sequence ID" value="AAW89913.1"/>
    <property type="molecule type" value="Genomic_DNA"/>
</dbReference>
<dbReference type="RefSeq" id="WP_010951224.1">
    <property type="nucleotide sequence ID" value="NC_002946.2"/>
</dbReference>
<dbReference type="RefSeq" id="YP_208325.1">
    <property type="nucleotide sequence ID" value="NC_002946.2"/>
</dbReference>
<dbReference type="SMR" id="Q5F7C4"/>
<dbReference type="STRING" id="242231.NGO_1254"/>
<dbReference type="KEGG" id="ngo:NGO_1254"/>
<dbReference type="PATRIC" id="fig|242231.10.peg.1476"/>
<dbReference type="HOGENOM" id="CLU_004485_1_1_4"/>
<dbReference type="Proteomes" id="UP000000535">
    <property type="component" value="Chromosome"/>
</dbReference>
<dbReference type="GO" id="GO:0005829">
    <property type="term" value="C:cytosol"/>
    <property type="evidence" value="ECO:0007669"/>
    <property type="project" value="TreeGrafter"/>
</dbReference>
<dbReference type="GO" id="GO:0004813">
    <property type="term" value="F:alanine-tRNA ligase activity"/>
    <property type="evidence" value="ECO:0007669"/>
    <property type="project" value="UniProtKB-UniRule"/>
</dbReference>
<dbReference type="GO" id="GO:0002161">
    <property type="term" value="F:aminoacyl-tRNA deacylase activity"/>
    <property type="evidence" value="ECO:0007669"/>
    <property type="project" value="TreeGrafter"/>
</dbReference>
<dbReference type="GO" id="GO:0005524">
    <property type="term" value="F:ATP binding"/>
    <property type="evidence" value="ECO:0007669"/>
    <property type="project" value="UniProtKB-UniRule"/>
</dbReference>
<dbReference type="GO" id="GO:0000049">
    <property type="term" value="F:tRNA binding"/>
    <property type="evidence" value="ECO:0007669"/>
    <property type="project" value="UniProtKB-KW"/>
</dbReference>
<dbReference type="GO" id="GO:0008270">
    <property type="term" value="F:zinc ion binding"/>
    <property type="evidence" value="ECO:0007669"/>
    <property type="project" value="UniProtKB-UniRule"/>
</dbReference>
<dbReference type="GO" id="GO:0006419">
    <property type="term" value="P:alanyl-tRNA aminoacylation"/>
    <property type="evidence" value="ECO:0007669"/>
    <property type="project" value="UniProtKB-UniRule"/>
</dbReference>
<dbReference type="GO" id="GO:0045892">
    <property type="term" value="P:negative regulation of DNA-templated transcription"/>
    <property type="evidence" value="ECO:0007669"/>
    <property type="project" value="TreeGrafter"/>
</dbReference>
<dbReference type="CDD" id="cd00673">
    <property type="entry name" value="AlaRS_core"/>
    <property type="match status" value="1"/>
</dbReference>
<dbReference type="FunFam" id="2.40.30.130:FF:000001">
    <property type="entry name" value="Alanine--tRNA ligase"/>
    <property type="match status" value="1"/>
</dbReference>
<dbReference type="FunFam" id="3.10.310.40:FF:000001">
    <property type="entry name" value="Alanine--tRNA ligase"/>
    <property type="match status" value="1"/>
</dbReference>
<dbReference type="FunFam" id="3.30.54.20:FF:000001">
    <property type="entry name" value="Alanine--tRNA ligase"/>
    <property type="match status" value="1"/>
</dbReference>
<dbReference type="FunFam" id="3.30.930.10:FF:000004">
    <property type="entry name" value="Alanine--tRNA ligase"/>
    <property type="match status" value="1"/>
</dbReference>
<dbReference type="FunFam" id="3.30.980.10:FF:000004">
    <property type="entry name" value="Alanine--tRNA ligase, cytoplasmic"/>
    <property type="match status" value="1"/>
</dbReference>
<dbReference type="Gene3D" id="2.40.30.130">
    <property type="match status" value="1"/>
</dbReference>
<dbReference type="Gene3D" id="3.10.310.40">
    <property type="match status" value="1"/>
</dbReference>
<dbReference type="Gene3D" id="3.30.54.20">
    <property type="match status" value="1"/>
</dbReference>
<dbReference type="Gene3D" id="3.30.930.10">
    <property type="entry name" value="Bira Bifunctional Protein, Domain 2"/>
    <property type="match status" value="1"/>
</dbReference>
<dbReference type="Gene3D" id="3.30.980.10">
    <property type="entry name" value="Threonyl-trna Synthetase, Chain A, domain 2"/>
    <property type="match status" value="1"/>
</dbReference>
<dbReference type="HAMAP" id="MF_00036_B">
    <property type="entry name" value="Ala_tRNA_synth_B"/>
    <property type="match status" value="1"/>
</dbReference>
<dbReference type="InterPro" id="IPR045864">
    <property type="entry name" value="aa-tRNA-synth_II/BPL/LPL"/>
</dbReference>
<dbReference type="InterPro" id="IPR002318">
    <property type="entry name" value="Ala-tRNA-lgiase_IIc"/>
</dbReference>
<dbReference type="InterPro" id="IPR018162">
    <property type="entry name" value="Ala-tRNA-ligase_IIc_anticod-bd"/>
</dbReference>
<dbReference type="InterPro" id="IPR018165">
    <property type="entry name" value="Ala-tRNA-synth_IIc_core"/>
</dbReference>
<dbReference type="InterPro" id="IPR018164">
    <property type="entry name" value="Ala-tRNA-synth_IIc_N"/>
</dbReference>
<dbReference type="InterPro" id="IPR050058">
    <property type="entry name" value="Ala-tRNA_ligase"/>
</dbReference>
<dbReference type="InterPro" id="IPR023033">
    <property type="entry name" value="Ala_tRNA_ligase_euk/bac"/>
</dbReference>
<dbReference type="InterPro" id="IPR003156">
    <property type="entry name" value="DHHA1_dom"/>
</dbReference>
<dbReference type="InterPro" id="IPR018163">
    <property type="entry name" value="Thr/Ala-tRNA-synth_IIc_edit"/>
</dbReference>
<dbReference type="InterPro" id="IPR009000">
    <property type="entry name" value="Transl_B-barrel_sf"/>
</dbReference>
<dbReference type="InterPro" id="IPR012947">
    <property type="entry name" value="tRNA_SAD"/>
</dbReference>
<dbReference type="NCBIfam" id="TIGR00344">
    <property type="entry name" value="alaS"/>
    <property type="match status" value="1"/>
</dbReference>
<dbReference type="PANTHER" id="PTHR11777:SF9">
    <property type="entry name" value="ALANINE--TRNA LIGASE, CYTOPLASMIC"/>
    <property type="match status" value="1"/>
</dbReference>
<dbReference type="PANTHER" id="PTHR11777">
    <property type="entry name" value="ALANYL-TRNA SYNTHETASE"/>
    <property type="match status" value="1"/>
</dbReference>
<dbReference type="Pfam" id="PF02272">
    <property type="entry name" value="DHHA1"/>
    <property type="match status" value="1"/>
</dbReference>
<dbReference type="Pfam" id="PF01411">
    <property type="entry name" value="tRNA-synt_2c"/>
    <property type="match status" value="1"/>
</dbReference>
<dbReference type="Pfam" id="PF07973">
    <property type="entry name" value="tRNA_SAD"/>
    <property type="match status" value="1"/>
</dbReference>
<dbReference type="PRINTS" id="PR00980">
    <property type="entry name" value="TRNASYNTHALA"/>
</dbReference>
<dbReference type="SMART" id="SM00863">
    <property type="entry name" value="tRNA_SAD"/>
    <property type="match status" value="1"/>
</dbReference>
<dbReference type="SUPFAM" id="SSF55681">
    <property type="entry name" value="Class II aaRS and biotin synthetases"/>
    <property type="match status" value="1"/>
</dbReference>
<dbReference type="SUPFAM" id="SSF101353">
    <property type="entry name" value="Putative anticodon-binding domain of alanyl-tRNA synthetase (AlaRS)"/>
    <property type="match status" value="1"/>
</dbReference>
<dbReference type="SUPFAM" id="SSF55186">
    <property type="entry name" value="ThrRS/AlaRS common domain"/>
    <property type="match status" value="1"/>
</dbReference>
<dbReference type="SUPFAM" id="SSF50447">
    <property type="entry name" value="Translation proteins"/>
    <property type="match status" value="1"/>
</dbReference>
<dbReference type="PROSITE" id="PS50860">
    <property type="entry name" value="AA_TRNA_LIGASE_II_ALA"/>
    <property type="match status" value="1"/>
</dbReference>
<gene>
    <name evidence="1" type="primary">alaS</name>
    <name type="ordered locus">NGO_1254</name>
</gene>
<name>SYA_NEIG1</name>
<keyword id="KW-0030">Aminoacyl-tRNA synthetase</keyword>
<keyword id="KW-0067">ATP-binding</keyword>
<keyword id="KW-0963">Cytoplasm</keyword>
<keyword id="KW-0436">Ligase</keyword>
<keyword id="KW-0479">Metal-binding</keyword>
<keyword id="KW-0547">Nucleotide-binding</keyword>
<keyword id="KW-0648">Protein biosynthesis</keyword>
<keyword id="KW-1185">Reference proteome</keyword>
<keyword id="KW-0694">RNA-binding</keyword>
<keyword id="KW-0820">tRNA-binding</keyword>
<keyword id="KW-0862">Zinc</keyword>
<organism>
    <name type="scientific">Neisseria gonorrhoeae (strain ATCC 700825 / FA 1090)</name>
    <dbReference type="NCBI Taxonomy" id="242231"/>
    <lineage>
        <taxon>Bacteria</taxon>
        <taxon>Pseudomonadati</taxon>
        <taxon>Pseudomonadota</taxon>
        <taxon>Betaproteobacteria</taxon>
        <taxon>Neisseriales</taxon>
        <taxon>Neisseriaceae</taxon>
        <taxon>Neisseria</taxon>
    </lineage>
</organism>
<feature type="chain" id="PRO_0000075159" description="Alanine--tRNA ligase">
    <location>
        <begin position="1"/>
        <end position="874"/>
    </location>
</feature>
<feature type="binding site" evidence="1">
    <location>
        <position position="562"/>
    </location>
    <ligand>
        <name>Zn(2+)</name>
        <dbReference type="ChEBI" id="CHEBI:29105"/>
    </ligand>
</feature>
<feature type="binding site" evidence="1">
    <location>
        <position position="566"/>
    </location>
    <ligand>
        <name>Zn(2+)</name>
        <dbReference type="ChEBI" id="CHEBI:29105"/>
    </ligand>
</feature>
<feature type="binding site" evidence="1">
    <location>
        <position position="664"/>
    </location>
    <ligand>
        <name>Zn(2+)</name>
        <dbReference type="ChEBI" id="CHEBI:29105"/>
    </ligand>
</feature>
<feature type="binding site" evidence="1">
    <location>
        <position position="668"/>
    </location>
    <ligand>
        <name>Zn(2+)</name>
        <dbReference type="ChEBI" id="CHEBI:29105"/>
    </ligand>
</feature>
<accession>Q5F7C4</accession>
<protein>
    <recommendedName>
        <fullName evidence="1">Alanine--tRNA ligase</fullName>
        <ecNumber evidence="1">6.1.1.7</ecNumber>
    </recommendedName>
    <alternativeName>
        <fullName evidence="1">Alanyl-tRNA synthetase</fullName>
        <shortName evidence="1">AlaRS</shortName>
    </alternativeName>
</protein>
<sequence length="874" mass="95927">MKTSELRQKFLKFFETKGHTVVRSSSLVPHDDPTLLFTNAGMNQFKDVFLGFDKRPYSRATTAQKCVRAGGKHNDLENVGYTARHHTFFEMMGNFSFGDYFKRDAIHFAWEFLTSPEWLNIPKDKLLATVYAEDDEAYNIWLNEIGMPSERIVRIGDNKGAKYASDNFWQMGDTGPCGPCSEIFYDHGKEIWGGIPGSPEEDGDRWIEIWNCVFMQFNRDEQGNMNPLPKPSVDTGMGLERMAAVMQHVHSNYEIDLFQDLLKAVARETGAPFSMEEPSLKVIADHIRSCSFLIADGVLPSNEGRGYVLRRIIRRAVRHGYKLGQSKPFFHKLVADLVQEMGGAYPELKEKQAQIEEALKNEESRFAQTLETGMALLENALAKGGKTLGGEIIFKLYDTYGFPYDLTADICRERNIEPDEAGFEREMEAQRARARAAQSFKANAQLPYDGQDTEFKGYSERQTESKVLALYKDGEQVVELNEGDSGAVVIDFTPFYAESGGQVGDVGYIFAGENRFEVRDTQKIKAAVFGQFGVQTSGRLKVGDSITAKVDDEIRNANMRNHSATHLMHKALRDVLGGHVEQKGSLVTAESTRFDISHPQAVTAEEIAEVERRVNEAILANVAVNAAIMSMEDAQKTDAMMLFGEKYGDEVRVLQMGGFSTELCGGTHVSRTGDIGLFKIISEGGIAAGVRRIEAITGLNALKWAQEQERLVKDIIAETKAQTEKDVLAKIQAGAAHAKALEKELARAKAELAVHAGAKLLDDAKDLGAAKLVAAQIEADAAALRETVTDLTGKSDNAVILLAAVNEGKVSLCAGVSKALTGKVKAGDLVKFAAEQVGGKGGGRPDLAQAGGTDADKLPEMLASAEGWLCQKLS</sequence>
<comment type="function">
    <text evidence="1">Catalyzes the attachment of alanine to tRNA(Ala) in a two-step reaction: alanine is first activated by ATP to form Ala-AMP and then transferred to the acceptor end of tRNA(Ala). Also edits incorrectly charged Ser-tRNA(Ala) and Gly-tRNA(Ala) via its editing domain.</text>
</comment>
<comment type="catalytic activity">
    <reaction evidence="1">
        <text>tRNA(Ala) + L-alanine + ATP = L-alanyl-tRNA(Ala) + AMP + diphosphate</text>
        <dbReference type="Rhea" id="RHEA:12540"/>
        <dbReference type="Rhea" id="RHEA-COMP:9657"/>
        <dbReference type="Rhea" id="RHEA-COMP:9923"/>
        <dbReference type="ChEBI" id="CHEBI:30616"/>
        <dbReference type="ChEBI" id="CHEBI:33019"/>
        <dbReference type="ChEBI" id="CHEBI:57972"/>
        <dbReference type="ChEBI" id="CHEBI:78442"/>
        <dbReference type="ChEBI" id="CHEBI:78497"/>
        <dbReference type="ChEBI" id="CHEBI:456215"/>
        <dbReference type="EC" id="6.1.1.7"/>
    </reaction>
</comment>
<comment type="cofactor">
    <cofactor evidence="1">
        <name>Zn(2+)</name>
        <dbReference type="ChEBI" id="CHEBI:29105"/>
    </cofactor>
    <text evidence="1">Binds 1 zinc ion per subunit.</text>
</comment>
<comment type="subcellular location">
    <subcellularLocation>
        <location evidence="1">Cytoplasm</location>
    </subcellularLocation>
</comment>
<comment type="domain">
    <text evidence="1">Consists of three domains; the N-terminal catalytic domain, the editing domain and the C-terminal C-Ala domain. The editing domain removes incorrectly charged amino acids, while the C-Ala domain, along with tRNA(Ala), serves as a bridge to cooperatively bring together the editing and aminoacylation centers thus stimulating deacylation of misacylated tRNAs.</text>
</comment>
<comment type="similarity">
    <text evidence="1">Belongs to the class-II aminoacyl-tRNA synthetase family.</text>
</comment>
<evidence type="ECO:0000255" key="1">
    <source>
        <dbReference type="HAMAP-Rule" id="MF_00036"/>
    </source>
</evidence>
<proteinExistence type="inferred from homology"/>
<reference key="1">
    <citation type="submission" date="2003-03" db="EMBL/GenBank/DDBJ databases">
        <title>The complete genome sequence of Neisseria gonorrhoeae.</title>
        <authorList>
            <person name="Lewis L.A."/>
            <person name="Gillaspy A.F."/>
            <person name="McLaughlin R.E."/>
            <person name="Gipson M."/>
            <person name="Ducey T.F."/>
            <person name="Ownbey T."/>
            <person name="Hartman K."/>
            <person name="Nydick C."/>
            <person name="Carson M.B."/>
            <person name="Vaughn J."/>
            <person name="Thomson C."/>
            <person name="Song L."/>
            <person name="Lin S."/>
            <person name="Yuan X."/>
            <person name="Najar F."/>
            <person name="Zhan M."/>
            <person name="Ren Q."/>
            <person name="Zhu H."/>
            <person name="Qi S."/>
            <person name="Kenton S.M."/>
            <person name="Lai H."/>
            <person name="White J.D."/>
            <person name="Clifton S."/>
            <person name="Roe B.A."/>
            <person name="Dyer D.W."/>
        </authorList>
    </citation>
    <scope>NUCLEOTIDE SEQUENCE [LARGE SCALE GENOMIC DNA]</scope>
    <source>
        <strain>ATCC 700825 / FA 1090</strain>
    </source>
</reference>